<dbReference type="EC" id="1.1.1.86" evidence="1"/>
<dbReference type="EMBL" id="AE014291">
    <property type="protein sequence ID" value="AAN30293.1"/>
    <property type="molecule type" value="Genomic_DNA"/>
</dbReference>
<dbReference type="EMBL" id="CP002997">
    <property type="protein sequence ID" value="AEM18709.1"/>
    <property type="molecule type" value="Genomic_DNA"/>
</dbReference>
<dbReference type="RefSeq" id="WP_004688531.1">
    <property type="nucleotide sequence ID" value="NZ_KN046804.1"/>
</dbReference>
<dbReference type="SMR" id="Q8FZU1"/>
<dbReference type="GeneID" id="97533405"/>
<dbReference type="KEGG" id="bms:BR1380"/>
<dbReference type="KEGG" id="bsi:BS1330_I1374"/>
<dbReference type="PATRIC" id="fig|204722.21.peg.858"/>
<dbReference type="HOGENOM" id="CLU_033821_0_1_5"/>
<dbReference type="PhylomeDB" id="Q8FZU1"/>
<dbReference type="UniPathway" id="UPA00047">
    <property type="reaction ID" value="UER00056"/>
</dbReference>
<dbReference type="UniPathway" id="UPA00049">
    <property type="reaction ID" value="UER00060"/>
</dbReference>
<dbReference type="PRO" id="PR:Q8FZU1"/>
<dbReference type="Proteomes" id="UP000007104">
    <property type="component" value="Chromosome I"/>
</dbReference>
<dbReference type="GO" id="GO:0005829">
    <property type="term" value="C:cytosol"/>
    <property type="evidence" value="ECO:0007669"/>
    <property type="project" value="TreeGrafter"/>
</dbReference>
<dbReference type="GO" id="GO:0004455">
    <property type="term" value="F:ketol-acid reductoisomerase activity"/>
    <property type="evidence" value="ECO:0007669"/>
    <property type="project" value="UniProtKB-UniRule"/>
</dbReference>
<dbReference type="GO" id="GO:0000287">
    <property type="term" value="F:magnesium ion binding"/>
    <property type="evidence" value="ECO:0007669"/>
    <property type="project" value="UniProtKB-UniRule"/>
</dbReference>
<dbReference type="GO" id="GO:0050661">
    <property type="term" value="F:NADP binding"/>
    <property type="evidence" value="ECO:0007669"/>
    <property type="project" value="InterPro"/>
</dbReference>
<dbReference type="GO" id="GO:0009097">
    <property type="term" value="P:isoleucine biosynthetic process"/>
    <property type="evidence" value="ECO:0007669"/>
    <property type="project" value="UniProtKB-UniRule"/>
</dbReference>
<dbReference type="GO" id="GO:0009099">
    <property type="term" value="P:L-valine biosynthetic process"/>
    <property type="evidence" value="ECO:0007669"/>
    <property type="project" value="UniProtKB-UniRule"/>
</dbReference>
<dbReference type="FunFam" id="3.40.50.720:FF:000023">
    <property type="entry name" value="Ketol-acid reductoisomerase (NADP(+))"/>
    <property type="match status" value="1"/>
</dbReference>
<dbReference type="Gene3D" id="6.10.240.10">
    <property type="match status" value="1"/>
</dbReference>
<dbReference type="Gene3D" id="3.40.50.720">
    <property type="entry name" value="NAD(P)-binding Rossmann-like Domain"/>
    <property type="match status" value="1"/>
</dbReference>
<dbReference type="HAMAP" id="MF_00435">
    <property type="entry name" value="IlvC"/>
    <property type="match status" value="1"/>
</dbReference>
<dbReference type="InterPro" id="IPR008927">
    <property type="entry name" value="6-PGluconate_DH-like_C_sf"/>
</dbReference>
<dbReference type="InterPro" id="IPR013023">
    <property type="entry name" value="KARI"/>
</dbReference>
<dbReference type="InterPro" id="IPR000506">
    <property type="entry name" value="KARI_C"/>
</dbReference>
<dbReference type="InterPro" id="IPR013116">
    <property type="entry name" value="KARI_N"/>
</dbReference>
<dbReference type="InterPro" id="IPR014359">
    <property type="entry name" value="KARI_prok"/>
</dbReference>
<dbReference type="InterPro" id="IPR036291">
    <property type="entry name" value="NAD(P)-bd_dom_sf"/>
</dbReference>
<dbReference type="NCBIfam" id="TIGR00465">
    <property type="entry name" value="ilvC"/>
    <property type="match status" value="1"/>
</dbReference>
<dbReference type="NCBIfam" id="NF004017">
    <property type="entry name" value="PRK05479.1"/>
    <property type="match status" value="1"/>
</dbReference>
<dbReference type="NCBIfam" id="NF009940">
    <property type="entry name" value="PRK13403.1"/>
    <property type="match status" value="1"/>
</dbReference>
<dbReference type="PANTHER" id="PTHR21371">
    <property type="entry name" value="KETOL-ACID REDUCTOISOMERASE, MITOCHONDRIAL"/>
    <property type="match status" value="1"/>
</dbReference>
<dbReference type="PANTHER" id="PTHR21371:SF1">
    <property type="entry name" value="KETOL-ACID REDUCTOISOMERASE, MITOCHONDRIAL"/>
    <property type="match status" value="1"/>
</dbReference>
<dbReference type="Pfam" id="PF01450">
    <property type="entry name" value="KARI_C"/>
    <property type="match status" value="1"/>
</dbReference>
<dbReference type="Pfam" id="PF07991">
    <property type="entry name" value="KARI_N"/>
    <property type="match status" value="1"/>
</dbReference>
<dbReference type="PIRSF" id="PIRSF000116">
    <property type="entry name" value="IlvC_gammaproteo"/>
    <property type="match status" value="1"/>
</dbReference>
<dbReference type="SUPFAM" id="SSF48179">
    <property type="entry name" value="6-phosphogluconate dehydrogenase C-terminal domain-like"/>
    <property type="match status" value="1"/>
</dbReference>
<dbReference type="SUPFAM" id="SSF51735">
    <property type="entry name" value="NAD(P)-binding Rossmann-fold domains"/>
    <property type="match status" value="1"/>
</dbReference>
<dbReference type="PROSITE" id="PS51851">
    <property type="entry name" value="KARI_C"/>
    <property type="match status" value="1"/>
</dbReference>
<dbReference type="PROSITE" id="PS51850">
    <property type="entry name" value="KARI_N"/>
    <property type="match status" value="1"/>
</dbReference>
<feature type="chain" id="PRO_0000151285" description="Ketol-acid reductoisomerase (NADP(+))">
    <location>
        <begin position="1"/>
        <end position="339"/>
    </location>
</feature>
<feature type="domain" description="KARI N-terminal Rossmann" evidence="2">
    <location>
        <begin position="1"/>
        <end position="182"/>
    </location>
</feature>
<feature type="domain" description="KARI C-terminal knotted" evidence="3">
    <location>
        <begin position="183"/>
        <end position="328"/>
    </location>
</feature>
<feature type="active site" evidence="1">
    <location>
        <position position="108"/>
    </location>
</feature>
<feature type="binding site" evidence="1">
    <location>
        <begin position="24"/>
        <end position="27"/>
    </location>
    <ligand>
        <name>NADP(+)</name>
        <dbReference type="ChEBI" id="CHEBI:58349"/>
    </ligand>
</feature>
<feature type="binding site" evidence="1">
    <location>
        <position position="48"/>
    </location>
    <ligand>
        <name>NADP(+)</name>
        <dbReference type="ChEBI" id="CHEBI:58349"/>
    </ligand>
</feature>
<feature type="binding site" evidence="1">
    <location>
        <position position="51"/>
    </location>
    <ligand>
        <name>NADP(+)</name>
        <dbReference type="ChEBI" id="CHEBI:58349"/>
    </ligand>
</feature>
<feature type="binding site" evidence="1">
    <location>
        <position position="53"/>
    </location>
    <ligand>
        <name>NADP(+)</name>
        <dbReference type="ChEBI" id="CHEBI:58349"/>
    </ligand>
</feature>
<feature type="binding site" evidence="1">
    <location>
        <begin position="83"/>
        <end position="86"/>
    </location>
    <ligand>
        <name>NADP(+)</name>
        <dbReference type="ChEBI" id="CHEBI:58349"/>
    </ligand>
</feature>
<feature type="binding site" evidence="1">
    <location>
        <position position="134"/>
    </location>
    <ligand>
        <name>NADP(+)</name>
        <dbReference type="ChEBI" id="CHEBI:58349"/>
    </ligand>
</feature>
<feature type="binding site" evidence="1">
    <location>
        <position position="191"/>
    </location>
    <ligand>
        <name>Mg(2+)</name>
        <dbReference type="ChEBI" id="CHEBI:18420"/>
        <label>1</label>
    </ligand>
</feature>
<feature type="binding site" evidence="1">
    <location>
        <position position="191"/>
    </location>
    <ligand>
        <name>Mg(2+)</name>
        <dbReference type="ChEBI" id="CHEBI:18420"/>
        <label>2</label>
    </ligand>
</feature>
<feature type="binding site" evidence="1">
    <location>
        <position position="195"/>
    </location>
    <ligand>
        <name>Mg(2+)</name>
        <dbReference type="ChEBI" id="CHEBI:18420"/>
        <label>1</label>
    </ligand>
</feature>
<feature type="binding site" evidence="1">
    <location>
        <position position="227"/>
    </location>
    <ligand>
        <name>Mg(2+)</name>
        <dbReference type="ChEBI" id="CHEBI:18420"/>
        <label>2</label>
    </ligand>
</feature>
<feature type="binding site" evidence="1">
    <location>
        <position position="231"/>
    </location>
    <ligand>
        <name>Mg(2+)</name>
        <dbReference type="ChEBI" id="CHEBI:18420"/>
        <label>2</label>
    </ligand>
</feature>
<feature type="binding site" evidence="1">
    <location>
        <position position="252"/>
    </location>
    <ligand>
        <name>substrate</name>
    </ligand>
</feature>
<comment type="function">
    <text evidence="1">Involved in the biosynthesis of branched-chain amino acids (BCAA). Catalyzes an alkyl-migration followed by a ketol-acid reduction of (S)-2-acetolactate (S2AL) to yield (R)-2,3-dihydroxy-isovalerate. In the isomerase reaction, S2AL is rearranged via a Mg-dependent methyl migration to produce 3-hydroxy-3-methyl-2-ketobutyrate (HMKB). In the reductase reaction, this 2-ketoacid undergoes a metal-dependent reduction by NADPH to yield (R)-2,3-dihydroxy-isovalerate.</text>
</comment>
<comment type="catalytic activity">
    <reaction evidence="1">
        <text>(2R)-2,3-dihydroxy-3-methylbutanoate + NADP(+) = (2S)-2-acetolactate + NADPH + H(+)</text>
        <dbReference type="Rhea" id="RHEA:22068"/>
        <dbReference type="ChEBI" id="CHEBI:15378"/>
        <dbReference type="ChEBI" id="CHEBI:49072"/>
        <dbReference type="ChEBI" id="CHEBI:57783"/>
        <dbReference type="ChEBI" id="CHEBI:58349"/>
        <dbReference type="ChEBI" id="CHEBI:58476"/>
        <dbReference type="EC" id="1.1.1.86"/>
    </reaction>
</comment>
<comment type="catalytic activity">
    <reaction evidence="1">
        <text>(2R,3R)-2,3-dihydroxy-3-methylpentanoate + NADP(+) = (S)-2-ethyl-2-hydroxy-3-oxobutanoate + NADPH + H(+)</text>
        <dbReference type="Rhea" id="RHEA:13493"/>
        <dbReference type="ChEBI" id="CHEBI:15378"/>
        <dbReference type="ChEBI" id="CHEBI:49256"/>
        <dbReference type="ChEBI" id="CHEBI:49258"/>
        <dbReference type="ChEBI" id="CHEBI:57783"/>
        <dbReference type="ChEBI" id="CHEBI:58349"/>
        <dbReference type="EC" id="1.1.1.86"/>
    </reaction>
</comment>
<comment type="cofactor">
    <cofactor evidence="1">
        <name>Mg(2+)</name>
        <dbReference type="ChEBI" id="CHEBI:18420"/>
    </cofactor>
    <text evidence="1">Binds 2 magnesium ions per subunit.</text>
</comment>
<comment type="pathway">
    <text evidence="1">Amino-acid biosynthesis; L-isoleucine biosynthesis; L-isoleucine from 2-oxobutanoate: step 2/4.</text>
</comment>
<comment type="pathway">
    <text evidence="1">Amino-acid biosynthesis; L-valine biosynthesis; L-valine from pyruvate: step 2/4.</text>
</comment>
<comment type="similarity">
    <text evidence="1">Belongs to the ketol-acid reductoisomerase family.</text>
</comment>
<keyword id="KW-0028">Amino-acid biosynthesis</keyword>
<keyword id="KW-0100">Branched-chain amino acid biosynthesis</keyword>
<keyword id="KW-0460">Magnesium</keyword>
<keyword id="KW-0479">Metal-binding</keyword>
<keyword id="KW-0521">NADP</keyword>
<keyword id="KW-0560">Oxidoreductase</keyword>
<evidence type="ECO:0000255" key="1">
    <source>
        <dbReference type="HAMAP-Rule" id="MF_00435"/>
    </source>
</evidence>
<evidence type="ECO:0000255" key="2">
    <source>
        <dbReference type="PROSITE-ProRule" id="PRU01197"/>
    </source>
</evidence>
<evidence type="ECO:0000255" key="3">
    <source>
        <dbReference type="PROSITE-ProRule" id="PRU01198"/>
    </source>
</evidence>
<protein>
    <recommendedName>
        <fullName evidence="1">Ketol-acid reductoisomerase (NADP(+))</fullName>
        <shortName evidence="1">KARI</shortName>
        <ecNumber evidence="1">1.1.1.86</ecNumber>
    </recommendedName>
    <alternativeName>
        <fullName evidence="1">Acetohydroxy-acid isomeroreductase</fullName>
        <shortName evidence="1">AHIR</shortName>
    </alternativeName>
    <alternativeName>
        <fullName evidence="1">Alpha-keto-beta-hydroxylacyl reductoisomerase</fullName>
    </alternativeName>
    <alternativeName>
        <fullName evidence="1">Ketol-acid reductoisomerase type 1</fullName>
    </alternativeName>
    <alternativeName>
        <fullName evidence="1">Ketol-acid reductoisomerase type I</fullName>
    </alternativeName>
</protein>
<sequence length="339" mass="37092">MRVYYDRDADVNLIKSKKVVIVGYGSQGRAHALNLKDSGAANVRVALREGSATVQKAQADGFEVMNVADAAKWADLMMMATPDELQADIYRDHIHNNLRDGAAIAFAHGLNVHFGLIEPKKTVDVVMIAPKGPGHTVRGEYQKGGGVPCLIAIHQDASGNAHDLALSYASGVGGGRSGVIETTFKEECETDLFGEQAVLCGGVVELIRTGFEVLVEAGYAPEMAYFECLNEMKLIVDLIYEGGIANMNYSISNTAEWGEYVTGPRIITAETKAEMKRVLKDIQTGKFTSDWMQEWKAGAARFKGIRRLNDAHQIEEVGGKLRAMMPWIEKNKLVDKARN</sequence>
<accession>Q8FZU1</accession>
<accession>G0KB63</accession>
<proteinExistence type="inferred from homology"/>
<gene>
    <name evidence="1" type="primary">ilvC</name>
    <name type="ordered locus">BR1380</name>
    <name type="ordered locus">BS1330_I1374</name>
</gene>
<organism>
    <name type="scientific">Brucella suis biovar 1 (strain 1330)</name>
    <dbReference type="NCBI Taxonomy" id="204722"/>
    <lineage>
        <taxon>Bacteria</taxon>
        <taxon>Pseudomonadati</taxon>
        <taxon>Pseudomonadota</taxon>
        <taxon>Alphaproteobacteria</taxon>
        <taxon>Hyphomicrobiales</taxon>
        <taxon>Brucellaceae</taxon>
        <taxon>Brucella/Ochrobactrum group</taxon>
        <taxon>Brucella</taxon>
    </lineage>
</organism>
<reference key="1">
    <citation type="journal article" date="2002" name="Proc. Natl. Acad. Sci. U.S.A.">
        <title>The Brucella suis genome reveals fundamental similarities between animal and plant pathogens and symbionts.</title>
        <authorList>
            <person name="Paulsen I.T."/>
            <person name="Seshadri R."/>
            <person name="Nelson K.E."/>
            <person name="Eisen J.A."/>
            <person name="Heidelberg J.F."/>
            <person name="Read T.D."/>
            <person name="Dodson R.J."/>
            <person name="Umayam L.A."/>
            <person name="Brinkac L.M."/>
            <person name="Beanan M.J."/>
            <person name="Daugherty S.C."/>
            <person name="DeBoy R.T."/>
            <person name="Durkin A.S."/>
            <person name="Kolonay J.F."/>
            <person name="Madupu R."/>
            <person name="Nelson W.C."/>
            <person name="Ayodeji B."/>
            <person name="Kraul M."/>
            <person name="Shetty J."/>
            <person name="Malek J.A."/>
            <person name="Van Aken S.E."/>
            <person name="Riedmuller S."/>
            <person name="Tettelin H."/>
            <person name="Gill S.R."/>
            <person name="White O."/>
            <person name="Salzberg S.L."/>
            <person name="Hoover D.L."/>
            <person name="Lindler L.E."/>
            <person name="Halling S.M."/>
            <person name="Boyle S.M."/>
            <person name="Fraser C.M."/>
        </authorList>
    </citation>
    <scope>NUCLEOTIDE SEQUENCE [LARGE SCALE GENOMIC DNA]</scope>
    <source>
        <strain>1330</strain>
    </source>
</reference>
<reference key="2">
    <citation type="journal article" date="2011" name="J. Bacteriol.">
        <title>Revised genome sequence of Brucella suis 1330.</title>
        <authorList>
            <person name="Tae H."/>
            <person name="Shallom S."/>
            <person name="Settlage R."/>
            <person name="Preston D."/>
            <person name="Adams L.G."/>
            <person name="Garner H.R."/>
        </authorList>
    </citation>
    <scope>NUCLEOTIDE SEQUENCE [LARGE SCALE GENOMIC DNA]</scope>
    <source>
        <strain>1330</strain>
    </source>
</reference>
<name>ILVC_BRUSU</name>